<organism>
    <name type="scientific">Yersinia pseudotuberculosis serotype O:1b (strain IP 31758)</name>
    <dbReference type="NCBI Taxonomy" id="349747"/>
    <lineage>
        <taxon>Bacteria</taxon>
        <taxon>Pseudomonadati</taxon>
        <taxon>Pseudomonadota</taxon>
        <taxon>Gammaproteobacteria</taxon>
        <taxon>Enterobacterales</taxon>
        <taxon>Yersiniaceae</taxon>
        <taxon>Yersinia</taxon>
    </lineage>
</organism>
<comment type="function">
    <text evidence="1">NDH-1 shuttles electrons from NADH, via FMN and iron-sulfur (Fe-S) centers, to quinones in the respiratory chain. The immediate electron acceptor for the enzyme in this species is believed to be ubiquinone. Couples the redox reaction to proton translocation (for every two electrons transferred, four hydrogen ions are translocated across the cytoplasmic membrane), and thus conserves the redox energy in a proton gradient. This subunit may bind ubiquinone.</text>
</comment>
<comment type="catalytic activity">
    <reaction evidence="1">
        <text>a quinone + NADH + 5 H(+)(in) = a quinol + NAD(+) + 4 H(+)(out)</text>
        <dbReference type="Rhea" id="RHEA:57888"/>
        <dbReference type="ChEBI" id="CHEBI:15378"/>
        <dbReference type="ChEBI" id="CHEBI:24646"/>
        <dbReference type="ChEBI" id="CHEBI:57540"/>
        <dbReference type="ChEBI" id="CHEBI:57945"/>
        <dbReference type="ChEBI" id="CHEBI:132124"/>
    </reaction>
</comment>
<comment type="subunit">
    <text evidence="1">NDH-1 is composed of 13 different subunits. Subunits NuoA, H, J, K, L, M, N constitute the membrane sector of the complex.</text>
</comment>
<comment type="subcellular location">
    <subcellularLocation>
        <location evidence="1">Cell inner membrane</location>
        <topology evidence="1">Multi-pass membrane protein</topology>
    </subcellularLocation>
</comment>
<comment type="similarity">
    <text evidence="1">Belongs to the complex I subunit 1 family.</text>
</comment>
<sequence>MSWFTPELIEILISVLKAVVILLVVVTCGAFMSFGERRLLGLFQNRYGPNRVGWGGSLQLVADMIKMFFKEDWVPRFSDRAIFTLAPVIAFTSLLLSFAIVPVSPTWAVADLNIGILFFLMMAGLAVYAVLFAGWASNNKYSLLGAMRASAQTLSYEVFLGLSLMGVVAQAGSFNMQDIVNSQEHVWNVIPQFFGFLTFAIAGVAVCHRHPFDQPEAEQELADGYHIEYSGMKFGLFFVGEYIGIVTVSALIVTLFFGGWQGPFLPPFIWFALKTAFFMVMFILIRASLPRPRYDQVMSFGWKVCLPLTLLNLLATAAVILYNAQ</sequence>
<proteinExistence type="inferred from homology"/>
<gene>
    <name evidence="1" type="primary">nuoH</name>
    <name type="ordered locus">YpsIP31758_1460</name>
</gene>
<accession>A7FGR0</accession>
<dbReference type="EC" id="7.1.1.-" evidence="1"/>
<dbReference type="EMBL" id="CP000720">
    <property type="protein sequence ID" value="ABS47938.1"/>
    <property type="molecule type" value="Genomic_DNA"/>
</dbReference>
<dbReference type="RefSeq" id="WP_002210274.1">
    <property type="nucleotide sequence ID" value="NC_009708.1"/>
</dbReference>
<dbReference type="SMR" id="A7FGR0"/>
<dbReference type="GeneID" id="96666080"/>
<dbReference type="KEGG" id="ypi:YpsIP31758_1460"/>
<dbReference type="HOGENOM" id="CLU_015134_0_1_6"/>
<dbReference type="Proteomes" id="UP000002412">
    <property type="component" value="Chromosome"/>
</dbReference>
<dbReference type="GO" id="GO:0005886">
    <property type="term" value="C:plasma membrane"/>
    <property type="evidence" value="ECO:0007669"/>
    <property type="project" value="UniProtKB-SubCell"/>
</dbReference>
<dbReference type="GO" id="GO:0003954">
    <property type="term" value="F:NADH dehydrogenase activity"/>
    <property type="evidence" value="ECO:0007669"/>
    <property type="project" value="TreeGrafter"/>
</dbReference>
<dbReference type="GO" id="GO:0016655">
    <property type="term" value="F:oxidoreductase activity, acting on NAD(P)H, quinone or similar compound as acceptor"/>
    <property type="evidence" value="ECO:0007669"/>
    <property type="project" value="UniProtKB-UniRule"/>
</dbReference>
<dbReference type="GO" id="GO:0048038">
    <property type="term" value="F:quinone binding"/>
    <property type="evidence" value="ECO:0007669"/>
    <property type="project" value="UniProtKB-KW"/>
</dbReference>
<dbReference type="GO" id="GO:0009060">
    <property type="term" value="P:aerobic respiration"/>
    <property type="evidence" value="ECO:0007669"/>
    <property type="project" value="TreeGrafter"/>
</dbReference>
<dbReference type="HAMAP" id="MF_01350">
    <property type="entry name" value="NDH1_NuoH"/>
    <property type="match status" value="1"/>
</dbReference>
<dbReference type="InterPro" id="IPR001694">
    <property type="entry name" value="NADH_UbQ_OxRdtase_su1/FPO"/>
</dbReference>
<dbReference type="InterPro" id="IPR018086">
    <property type="entry name" value="NADH_UbQ_OxRdtase_su1_CS"/>
</dbReference>
<dbReference type="NCBIfam" id="NF004740">
    <property type="entry name" value="PRK06076.1-1"/>
    <property type="match status" value="1"/>
</dbReference>
<dbReference type="NCBIfam" id="NF004741">
    <property type="entry name" value="PRK06076.1-2"/>
    <property type="match status" value="1"/>
</dbReference>
<dbReference type="PANTHER" id="PTHR11432">
    <property type="entry name" value="NADH DEHYDROGENASE SUBUNIT 1"/>
    <property type="match status" value="1"/>
</dbReference>
<dbReference type="PANTHER" id="PTHR11432:SF3">
    <property type="entry name" value="NADH-UBIQUINONE OXIDOREDUCTASE CHAIN 1"/>
    <property type="match status" value="1"/>
</dbReference>
<dbReference type="Pfam" id="PF00146">
    <property type="entry name" value="NADHdh"/>
    <property type="match status" value="1"/>
</dbReference>
<dbReference type="PROSITE" id="PS00667">
    <property type="entry name" value="COMPLEX1_ND1_1"/>
    <property type="match status" value="1"/>
</dbReference>
<dbReference type="PROSITE" id="PS00668">
    <property type="entry name" value="COMPLEX1_ND1_2"/>
    <property type="match status" value="1"/>
</dbReference>
<feature type="chain" id="PRO_1000067759" description="NADH-quinone oxidoreductase subunit H">
    <location>
        <begin position="1"/>
        <end position="325"/>
    </location>
</feature>
<feature type="transmembrane region" description="Helical" evidence="1">
    <location>
        <begin position="11"/>
        <end position="31"/>
    </location>
</feature>
<feature type="transmembrane region" description="Helical" evidence="1">
    <location>
        <begin position="81"/>
        <end position="101"/>
    </location>
</feature>
<feature type="transmembrane region" description="Helical" evidence="1">
    <location>
        <begin position="114"/>
        <end position="134"/>
    </location>
</feature>
<feature type="transmembrane region" description="Helical" evidence="1">
    <location>
        <begin position="154"/>
        <end position="174"/>
    </location>
</feature>
<feature type="transmembrane region" description="Helical" evidence="1">
    <location>
        <begin position="186"/>
        <end position="206"/>
    </location>
</feature>
<feature type="transmembrane region" description="Helical" evidence="1">
    <location>
        <begin position="237"/>
        <end position="257"/>
    </location>
</feature>
<feature type="transmembrane region" description="Helical" evidence="1">
    <location>
        <begin position="265"/>
        <end position="285"/>
    </location>
</feature>
<feature type="transmembrane region" description="Helical" evidence="1">
    <location>
        <begin position="304"/>
        <end position="324"/>
    </location>
</feature>
<protein>
    <recommendedName>
        <fullName evidence="1">NADH-quinone oxidoreductase subunit H</fullName>
        <ecNumber evidence="1">7.1.1.-</ecNumber>
    </recommendedName>
    <alternativeName>
        <fullName evidence="1">NADH dehydrogenase I subunit H</fullName>
    </alternativeName>
    <alternativeName>
        <fullName evidence="1">NDH-1 subunit H</fullName>
    </alternativeName>
</protein>
<reference key="1">
    <citation type="journal article" date="2007" name="PLoS Genet.">
        <title>The complete genome sequence of Yersinia pseudotuberculosis IP31758, the causative agent of Far East scarlet-like fever.</title>
        <authorList>
            <person name="Eppinger M."/>
            <person name="Rosovitz M.J."/>
            <person name="Fricke W.F."/>
            <person name="Rasko D.A."/>
            <person name="Kokorina G."/>
            <person name="Fayolle C."/>
            <person name="Lindler L.E."/>
            <person name="Carniel E."/>
            <person name="Ravel J."/>
        </authorList>
    </citation>
    <scope>NUCLEOTIDE SEQUENCE [LARGE SCALE GENOMIC DNA]</scope>
    <source>
        <strain>IP 31758</strain>
    </source>
</reference>
<name>NUOH_YERP3</name>
<keyword id="KW-0997">Cell inner membrane</keyword>
<keyword id="KW-1003">Cell membrane</keyword>
<keyword id="KW-0472">Membrane</keyword>
<keyword id="KW-0520">NAD</keyword>
<keyword id="KW-0874">Quinone</keyword>
<keyword id="KW-1278">Translocase</keyword>
<keyword id="KW-0812">Transmembrane</keyword>
<keyword id="KW-1133">Transmembrane helix</keyword>
<keyword id="KW-0830">Ubiquinone</keyword>
<evidence type="ECO:0000255" key="1">
    <source>
        <dbReference type="HAMAP-Rule" id="MF_01350"/>
    </source>
</evidence>